<protein>
    <recommendedName>
        <fullName evidence="1">Histidine ammonia-lyase</fullName>
        <shortName evidence="1">Histidase</shortName>
        <ecNumber evidence="1">4.3.1.3</ecNumber>
    </recommendedName>
</protein>
<proteinExistence type="inferred from homology"/>
<gene>
    <name evidence="1" type="primary">hutH</name>
    <name type="ordered locus">PA5098</name>
</gene>
<name>HUTH_PSEAE</name>
<keyword id="KW-0963">Cytoplasm</keyword>
<keyword id="KW-0369">Histidine metabolism</keyword>
<keyword id="KW-0456">Lyase</keyword>
<keyword id="KW-1185">Reference proteome</keyword>
<comment type="catalytic activity">
    <reaction evidence="1">
        <text>L-histidine = trans-urocanate + NH4(+)</text>
        <dbReference type="Rhea" id="RHEA:21232"/>
        <dbReference type="ChEBI" id="CHEBI:17771"/>
        <dbReference type="ChEBI" id="CHEBI:28938"/>
        <dbReference type="ChEBI" id="CHEBI:57595"/>
        <dbReference type="EC" id="4.3.1.3"/>
    </reaction>
</comment>
<comment type="pathway">
    <text evidence="1">Amino-acid degradation; L-histidine degradation into L-glutamate; N-formimidoyl-L-glutamate from L-histidine: step 1/3.</text>
</comment>
<comment type="subcellular location">
    <subcellularLocation>
        <location evidence="1">Cytoplasm</location>
    </subcellularLocation>
</comment>
<comment type="PTM">
    <text evidence="1">Contains an active site 4-methylidene-imidazol-5-one (MIO), which is formed autocatalytically by cyclization and dehydration of residues Ala-Ser-Gly.</text>
</comment>
<comment type="similarity">
    <text evidence="1">Belongs to the PAL/histidase family.</text>
</comment>
<feature type="chain" id="PRO_0000161015" description="Histidine ammonia-lyase">
    <location>
        <begin position="1"/>
        <end position="509"/>
    </location>
</feature>
<feature type="modified residue" description="2,3-didehydroalanine (Ser)" evidence="1">
    <location>
        <position position="143"/>
    </location>
</feature>
<feature type="cross-link" description="5-imidazolinone (Ala-Gly)" evidence="1">
    <location>
        <begin position="142"/>
        <end position="144"/>
    </location>
</feature>
<reference key="1">
    <citation type="journal article" date="2000" name="Nature">
        <title>Complete genome sequence of Pseudomonas aeruginosa PAO1, an opportunistic pathogen.</title>
        <authorList>
            <person name="Stover C.K."/>
            <person name="Pham X.-Q.T."/>
            <person name="Erwin A.L."/>
            <person name="Mizoguchi S.D."/>
            <person name="Warrener P."/>
            <person name="Hickey M.J."/>
            <person name="Brinkman F.S.L."/>
            <person name="Hufnagle W.O."/>
            <person name="Kowalik D.J."/>
            <person name="Lagrou M."/>
            <person name="Garber R.L."/>
            <person name="Goltry L."/>
            <person name="Tolentino E."/>
            <person name="Westbrock-Wadman S."/>
            <person name="Yuan Y."/>
            <person name="Brody L.L."/>
            <person name="Coulter S.N."/>
            <person name="Folger K.R."/>
            <person name="Kas A."/>
            <person name="Larbig K."/>
            <person name="Lim R.M."/>
            <person name="Smith K.A."/>
            <person name="Spencer D.H."/>
            <person name="Wong G.K.-S."/>
            <person name="Wu Z."/>
            <person name="Paulsen I.T."/>
            <person name="Reizer J."/>
            <person name="Saier M.H. Jr."/>
            <person name="Hancock R.E.W."/>
            <person name="Lory S."/>
            <person name="Olson M.V."/>
        </authorList>
    </citation>
    <scope>NUCLEOTIDE SEQUENCE [LARGE SCALE GENOMIC DNA]</scope>
    <source>
        <strain>ATCC 15692 / DSM 22644 / CIP 104116 / JCM 14847 / LMG 12228 / 1C / PRS 101 / PAO1</strain>
    </source>
</reference>
<evidence type="ECO:0000255" key="1">
    <source>
        <dbReference type="HAMAP-Rule" id="MF_00229"/>
    </source>
</evidence>
<accession>Q9HU85</accession>
<organism>
    <name type="scientific">Pseudomonas aeruginosa (strain ATCC 15692 / DSM 22644 / CIP 104116 / JCM 14847 / LMG 12228 / 1C / PRS 101 / PAO1)</name>
    <dbReference type="NCBI Taxonomy" id="208964"/>
    <lineage>
        <taxon>Bacteria</taxon>
        <taxon>Pseudomonadati</taxon>
        <taxon>Pseudomonadota</taxon>
        <taxon>Gammaproteobacteria</taxon>
        <taxon>Pseudomonadales</taxon>
        <taxon>Pseudomonadaceae</taxon>
        <taxon>Pseudomonas</taxon>
    </lineage>
</organism>
<dbReference type="EC" id="4.3.1.3" evidence="1"/>
<dbReference type="EMBL" id="AE004091">
    <property type="protein sequence ID" value="AAG08483.1"/>
    <property type="molecule type" value="Genomic_DNA"/>
</dbReference>
<dbReference type="PIR" id="G83009">
    <property type="entry name" value="G83009"/>
</dbReference>
<dbReference type="RefSeq" id="NP_253785.1">
    <property type="nucleotide sequence ID" value="NC_002516.2"/>
</dbReference>
<dbReference type="RefSeq" id="WP_003114461.1">
    <property type="nucleotide sequence ID" value="NZ_QZGE01000002.1"/>
</dbReference>
<dbReference type="SMR" id="Q9HU85"/>
<dbReference type="STRING" id="208964.PA5098"/>
<dbReference type="PaxDb" id="208964-PA5098"/>
<dbReference type="GeneID" id="878368"/>
<dbReference type="KEGG" id="pae:PA5098"/>
<dbReference type="PATRIC" id="fig|208964.12.peg.5343"/>
<dbReference type="PseudoCAP" id="PA5098"/>
<dbReference type="HOGENOM" id="CLU_014801_4_0_6"/>
<dbReference type="InParanoid" id="Q9HU85"/>
<dbReference type="OrthoDB" id="9806955at2"/>
<dbReference type="PhylomeDB" id="Q9HU85"/>
<dbReference type="BioCyc" id="PAER208964:G1FZ6-5213-MONOMER"/>
<dbReference type="UniPathway" id="UPA00379">
    <property type="reaction ID" value="UER00549"/>
</dbReference>
<dbReference type="Proteomes" id="UP000002438">
    <property type="component" value="Chromosome"/>
</dbReference>
<dbReference type="GO" id="GO:0005737">
    <property type="term" value="C:cytoplasm"/>
    <property type="evidence" value="ECO:0007669"/>
    <property type="project" value="UniProtKB-SubCell"/>
</dbReference>
<dbReference type="GO" id="GO:0004397">
    <property type="term" value="F:histidine ammonia-lyase activity"/>
    <property type="evidence" value="ECO:0000315"/>
    <property type="project" value="PseudoCAP"/>
</dbReference>
<dbReference type="GO" id="GO:0006548">
    <property type="term" value="P:L-histidine catabolic process"/>
    <property type="evidence" value="ECO:0000315"/>
    <property type="project" value="PseudoCAP"/>
</dbReference>
<dbReference type="GO" id="GO:0019556">
    <property type="term" value="P:L-histidine catabolic process to glutamate and formamide"/>
    <property type="evidence" value="ECO:0007669"/>
    <property type="project" value="UniProtKB-UniPathway"/>
</dbReference>
<dbReference type="GO" id="GO:0019557">
    <property type="term" value="P:L-histidine catabolic process to glutamate and formate"/>
    <property type="evidence" value="ECO:0007669"/>
    <property type="project" value="UniProtKB-UniPathway"/>
</dbReference>
<dbReference type="CDD" id="cd00332">
    <property type="entry name" value="PAL-HAL"/>
    <property type="match status" value="1"/>
</dbReference>
<dbReference type="FunFam" id="1.10.275.10:FF:000005">
    <property type="entry name" value="Histidine ammonia-lyase"/>
    <property type="match status" value="1"/>
</dbReference>
<dbReference type="FunFam" id="1.20.200.10:FF:000003">
    <property type="entry name" value="Histidine ammonia-lyase"/>
    <property type="match status" value="1"/>
</dbReference>
<dbReference type="Gene3D" id="1.20.200.10">
    <property type="entry name" value="Fumarase/aspartase (Central domain)"/>
    <property type="match status" value="1"/>
</dbReference>
<dbReference type="Gene3D" id="1.10.275.10">
    <property type="entry name" value="Fumarase/aspartase (N-terminal domain)"/>
    <property type="match status" value="1"/>
</dbReference>
<dbReference type="HAMAP" id="MF_00229">
    <property type="entry name" value="His_ammonia_lyase"/>
    <property type="match status" value="1"/>
</dbReference>
<dbReference type="InterPro" id="IPR001106">
    <property type="entry name" value="Aromatic_Lyase"/>
</dbReference>
<dbReference type="InterPro" id="IPR024083">
    <property type="entry name" value="Fumarase/histidase_N"/>
</dbReference>
<dbReference type="InterPro" id="IPR005921">
    <property type="entry name" value="HutH"/>
</dbReference>
<dbReference type="InterPro" id="IPR008948">
    <property type="entry name" value="L-Aspartase-like"/>
</dbReference>
<dbReference type="InterPro" id="IPR022313">
    <property type="entry name" value="Phe/His_NH3-lyase_AS"/>
</dbReference>
<dbReference type="NCBIfam" id="TIGR01225">
    <property type="entry name" value="hutH"/>
    <property type="match status" value="1"/>
</dbReference>
<dbReference type="NCBIfam" id="NF006871">
    <property type="entry name" value="PRK09367.1"/>
    <property type="match status" value="1"/>
</dbReference>
<dbReference type="PANTHER" id="PTHR10362">
    <property type="entry name" value="HISTIDINE AMMONIA-LYASE"/>
    <property type="match status" value="1"/>
</dbReference>
<dbReference type="Pfam" id="PF00221">
    <property type="entry name" value="Lyase_aromatic"/>
    <property type="match status" value="1"/>
</dbReference>
<dbReference type="SUPFAM" id="SSF48557">
    <property type="entry name" value="L-aspartase-like"/>
    <property type="match status" value="1"/>
</dbReference>
<dbReference type="PROSITE" id="PS00488">
    <property type="entry name" value="PAL_HISTIDASE"/>
    <property type="match status" value="1"/>
</dbReference>
<sequence>MSLHLKPGQLTLADLRQAYLAPVRLSLDPSADAPIAASVACVENIIAEGRTAYGINTGFGLLASTRISPADLEKLQRSIVLSHAAGVGEALDDAMVRLVMLLKVNSLARGFSGIRRKVIDALIALINAEVYPHIPLKGSVGASGDLAPLAHMSLVLIGESRARHRGEWLPAAEALAVAGLEPLTLAAKEGLALLNGTQVSTAYALRGLFEAEDLFAAATVCGGLSVEAMLGSRAPFDARIHAARGQRGQIDVAAAYRDLLTASSEVARSHEKCDKVQDPYSLRCQPQVMGACLTQMRQAAEVLEIEANAVSDNPLVFAAEGDVISGGNFHAEPVAMAADNLALALAEIGSLSERRISLMMDMHMSQLPPFLVANGGVNSGFMIAQVTAAALASDNKALAHPASVDSLPTSANQEDHVSMAPNAGKRLWAMAENVRGILAVEWLGACQGLDFREGLKSSPKLEQARRLLRDKVPYYQEDRFFAPDIEAASQLLASGCLNALLPARLLPSL</sequence>